<dbReference type="EMBL" id="EF380353">
    <property type="protein sequence ID" value="ABR01451.1"/>
    <property type="molecule type" value="Genomic_DNA"/>
</dbReference>
<dbReference type="RefSeq" id="YP_001294373.1">
    <property type="nucleotide sequence ID" value="NC_009601.1"/>
</dbReference>
<dbReference type="GeneID" id="5236573"/>
<dbReference type="GO" id="GO:0009507">
    <property type="term" value="C:chloroplast"/>
    <property type="evidence" value="ECO:0007669"/>
    <property type="project" value="UniProtKB-SubCell"/>
</dbReference>
<dbReference type="GO" id="GO:1990904">
    <property type="term" value="C:ribonucleoprotein complex"/>
    <property type="evidence" value="ECO:0007669"/>
    <property type="project" value="UniProtKB-KW"/>
</dbReference>
<dbReference type="GO" id="GO:0005840">
    <property type="term" value="C:ribosome"/>
    <property type="evidence" value="ECO:0007669"/>
    <property type="project" value="UniProtKB-KW"/>
</dbReference>
<dbReference type="GO" id="GO:0003735">
    <property type="term" value="F:structural constituent of ribosome"/>
    <property type="evidence" value="ECO:0007669"/>
    <property type="project" value="InterPro"/>
</dbReference>
<dbReference type="GO" id="GO:0006412">
    <property type="term" value="P:translation"/>
    <property type="evidence" value="ECO:0007669"/>
    <property type="project" value="UniProtKB-UniRule"/>
</dbReference>
<dbReference type="Gene3D" id="2.20.28.120">
    <property type="entry name" value="Ribosomal protein L33"/>
    <property type="match status" value="1"/>
</dbReference>
<dbReference type="HAMAP" id="MF_00294">
    <property type="entry name" value="Ribosomal_bL33"/>
    <property type="match status" value="1"/>
</dbReference>
<dbReference type="InterPro" id="IPR001705">
    <property type="entry name" value="Ribosomal_bL33"/>
</dbReference>
<dbReference type="InterPro" id="IPR018264">
    <property type="entry name" value="Ribosomal_bL33_CS"/>
</dbReference>
<dbReference type="InterPro" id="IPR038584">
    <property type="entry name" value="Ribosomal_bL33_sf"/>
</dbReference>
<dbReference type="InterPro" id="IPR011332">
    <property type="entry name" value="Ribosomal_zn-bd"/>
</dbReference>
<dbReference type="NCBIfam" id="NF001764">
    <property type="entry name" value="PRK00504.1"/>
    <property type="match status" value="1"/>
</dbReference>
<dbReference type="NCBIfam" id="NF001860">
    <property type="entry name" value="PRK00595.1"/>
    <property type="match status" value="1"/>
</dbReference>
<dbReference type="NCBIfam" id="TIGR01023">
    <property type="entry name" value="rpmG_bact"/>
    <property type="match status" value="1"/>
</dbReference>
<dbReference type="PANTHER" id="PTHR43168">
    <property type="entry name" value="50S RIBOSOMAL PROTEIN L33, CHLOROPLASTIC"/>
    <property type="match status" value="1"/>
</dbReference>
<dbReference type="PANTHER" id="PTHR43168:SF2">
    <property type="entry name" value="LARGE RIBOSOMAL SUBUNIT PROTEIN BL33C"/>
    <property type="match status" value="1"/>
</dbReference>
<dbReference type="Pfam" id="PF00471">
    <property type="entry name" value="Ribosomal_L33"/>
    <property type="match status" value="1"/>
</dbReference>
<dbReference type="SUPFAM" id="SSF57829">
    <property type="entry name" value="Zn-binding ribosomal proteins"/>
    <property type="match status" value="1"/>
</dbReference>
<dbReference type="PROSITE" id="PS00582">
    <property type="entry name" value="RIBOSOMAL_L33"/>
    <property type="match status" value="1"/>
</dbReference>
<accession>A6MMM8</accession>
<proteinExistence type="inferred from homology"/>
<sequence length="66" mass="7735">MAKGKDVRVRIILECASCVRNGINKELPGISRYITQKSRHNTPNRLELRKYCHYCRTHTIHGEIKK</sequence>
<gene>
    <name evidence="1" type="primary">rpl33</name>
</gene>
<evidence type="ECO:0000255" key="1">
    <source>
        <dbReference type="HAMAP-Rule" id="MF_00294"/>
    </source>
</evidence>
<evidence type="ECO:0000305" key="2"/>
<keyword id="KW-0150">Chloroplast</keyword>
<keyword id="KW-0934">Plastid</keyword>
<keyword id="KW-0687">Ribonucleoprotein</keyword>
<keyword id="KW-0689">Ribosomal protein</keyword>
<organism>
    <name type="scientific">Dioscorea elephantipes</name>
    <name type="common">Elephant's foot yam</name>
    <name type="synonym">Testudinaria elephantipes</name>
    <dbReference type="NCBI Taxonomy" id="145284"/>
    <lineage>
        <taxon>Eukaryota</taxon>
        <taxon>Viridiplantae</taxon>
        <taxon>Streptophyta</taxon>
        <taxon>Embryophyta</taxon>
        <taxon>Tracheophyta</taxon>
        <taxon>Spermatophyta</taxon>
        <taxon>Magnoliopsida</taxon>
        <taxon>Liliopsida</taxon>
        <taxon>Dioscoreales</taxon>
        <taxon>Dioscoreaceae</taxon>
        <taxon>Dioscorea</taxon>
    </lineage>
</organism>
<reference key="1">
    <citation type="journal article" date="2007" name="Mol. Phylogenet. Evol.">
        <title>Phylogenetic and evolutionary implications of complete chloroplast genome sequences of four early-diverging angiosperms: Buxus (Buxaceae), Chloranthus (Chloranthaceae), Dioscorea (Dioscoreaceae), and Illicium (Schisandraceae).</title>
        <authorList>
            <person name="Hansen D.R."/>
            <person name="Dastidar S.G."/>
            <person name="Cai Z."/>
            <person name="Penaflor C."/>
            <person name="Kuehl J.V."/>
            <person name="Boore J.L."/>
            <person name="Jansen R.K."/>
        </authorList>
    </citation>
    <scope>NUCLEOTIDE SEQUENCE [LARGE SCALE GENOMIC DNA]</scope>
</reference>
<protein>
    <recommendedName>
        <fullName evidence="1">Large ribosomal subunit protein bL33c</fullName>
    </recommendedName>
    <alternativeName>
        <fullName evidence="2">50S ribosomal protein L33, chloroplastic</fullName>
    </alternativeName>
</protein>
<name>RK33_DIOEL</name>
<geneLocation type="chloroplast"/>
<comment type="subcellular location">
    <subcellularLocation>
        <location>Plastid</location>
        <location>Chloroplast</location>
    </subcellularLocation>
</comment>
<comment type="similarity">
    <text evidence="1">Belongs to the bacterial ribosomal protein bL33 family.</text>
</comment>
<feature type="chain" id="PRO_0000356801" description="Large ribosomal subunit protein bL33c">
    <location>
        <begin position="1"/>
        <end position="66"/>
    </location>
</feature>